<protein>
    <recommendedName>
        <fullName evidence="1">Peptidase T</fullName>
        <ecNumber evidence="1">3.4.11.4</ecNumber>
    </recommendedName>
    <alternativeName>
        <fullName evidence="1">Aminotripeptidase</fullName>
        <shortName evidence="1">Tripeptidase</shortName>
    </alternativeName>
    <alternativeName>
        <fullName evidence="1">Tripeptide aminopeptidase</fullName>
    </alternativeName>
</protein>
<gene>
    <name evidence="1" type="primary">pepT</name>
    <name type="ordered locus">SPy_0799</name>
    <name type="ordered locus">M5005_Spy0614</name>
</gene>
<dbReference type="EC" id="3.4.11.4" evidence="1"/>
<dbReference type="EMBL" id="AE004092">
    <property type="protein sequence ID" value="AAK33736.1"/>
    <property type="molecule type" value="Genomic_DNA"/>
</dbReference>
<dbReference type="EMBL" id="CP000017">
    <property type="protein sequence ID" value="AAZ51232.1"/>
    <property type="molecule type" value="Genomic_DNA"/>
</dbReference>
<dbReference type="RefSeq" id="NP_269015.1">
    <property type="nucleotide sequence ID" value="NC_002737.2"/>
</dbReference>
<dbReference type="SMR" id="Q9A0F4"/>
<dbReference type="MEROPS" id="M20.003"/>
<dbReference type="PaxDb" id="1314-HKU360_00625"/>
<dbReference type="KEGG" id="spy:SPy_0799"/>
<dbReference type="KEGG" id="spz:M5005_Spy0614"/>
<dbReference type="PATRIC" id="fig|160490.10.peg.682"/>
<dbReference type="HOGENOM" id="CLU_053676_0_0_9"/>
<dbReference type="OMA" id="GHNFHGK"/>
<dbReference type="Proteomes" id="UP000000750">
    <property type="component" value="Chromosome"/>
</dbReference>
<dbReference type="GO" id="GO:0005829">
    <property type="term" value="C:cytosol"/>
    <property type="evidence" value="ECO:0007669"/>
    <property type="project" value="TreeGrafter"/>
</dbReference>
<dbReference type="GO" id="GO:0008237">
    <property type="term" value="F:metallopeptidase activity"/>
    <property type="evidence" value="ECO:0007669"/>
    <property type="project" value="UniProtKB-KW"/>
</dbReference>
<dbReference type="GO" id="GO:0045148">
    <property type="term" value="F:tripeptide aminopeptidase activity"/>
    <property type="evidence" value="ECO:0007669"/>
    <property type="project" value="UniProtKB-UniRule"/>
</dbReference>
<dbReference type="GO" id="GO:0008270">
    <property type="term" value="F:zinc ion binding"/>
    <property type="evidence" value="ECO:0007669"/>
    <property type="project" value="UniProtKB-UniRule"/>
</dbReference>
<dbReference type="GO" id="GO:0043171">
    <property type="term" value="P:peptide catabolic process"/>
    <property type="evidence" value="ECO:0007669"/>
    <property type="project" value="UniProtKB-UniRule"/>
</dbReference>
<dbReference type="GO" id="GO:0006508">
    <property type="term" value="P:proteolysis"/>
    <property type="evidence" value="ECO:0007669"/>
    <property type="project" value="UniProtKB-UniRule"/>
</dbReference>
<dbReference type="CDD" id="cd03892">
    <property type="entry name" value="M20_peptT"/>
    <property type="match status" value="1"/>
</dbReference>
<dbReference type="FunFam" id="3.30.70.360:FF:000002">
    <property type="entry name" value="Peptidase T"/>
    <property type="match status" value="1"/>
</dbReference>
<dbReference type="Gene3D" id="3.30.70.360">
    <property type="match status" value="1"/>
</dbReference>
<dbReference type="Gene3D" id="3.40.630.10">
    <property type="entry name" value="Zn peptidases"/>
    <property type="match status" value="1"/>
</dbReference>
<dbReference type="HAMAP" id="MF_00550">
    <property type="entry name" value="Aminopeptidase_M20"/>
    <property type="match status" value="1"/>
</dbReference>
<dbReference type="InterPro" id="IPR001261">
    <property type="entry name" value="ArgE/DapE_CS"/>
</dbReference>
<dbReference type="InterPro" id="IPR036264">
    <property type="entry name" value="Bact_exopeptidase_dim_dom"/>
</dbReference>
<dbReference type="InterPro" id="IPR002933">
    <property type="entry name" value="Peptidase_M20"/>
</dbReference>
<dbReference type="InterPro" id="IPR011650">
    <property type="entry name" value="Peptidase_M20_dimer"/>
</dbReference>
<dbReference type="InterPro" id="IPR010161">
    <property type="entry name" value="Peptidase_M20B"/>
</dbReference>
<dbReference type="NCBIfam" id="TIGR01882">
    <property type="entry name" value="peptidase-T"/>
    <property type="match status" value="1"/>
</dbReference>
<dbReference type="NCBIfam" id="NF003976">
    <property type="entry name" value="PRK05469.1"/>
    <property type="match status" value="1"/>
</dbReference>
<dbReference type="NCBIfam" id="NF009920">
    <property type="entry name" value="PRK13381.1"/>
    <property type="match status" value="1"/>
</dbReference>
<dbReference type="PANTHER" id="PTHR42994">
    <property type="entry name" value="PEPTIDASE T"/>
    <property type="match status" value="1"/>
</dbReference>
<dbReference type="PANTHER" id="PTHR42994:SF1">
    <property type="entry name" value="PEPTIDASE T"/>
    <property type="match status" value="1"/>
</dbReference>
<dbReference type="Pfam" id="PF07687">
    <property type="entry name" value="M20_dimer"/>
    <property type="match status" value="1"/>
</dbReference>
<dbReference type="Pfam" id="PF01546">
    <property type="entry name" value="Peptidase_M20"/>
    <property type="match status" value="1"/>
</dbReference>
<dbReference type="PIRSF" id="PIRSF037215">
    <property type="entry name" value="Peptidase_M20B"/>
    <property type="match status" value="1"/>
</dbReference>
<dbReference type="SUPFAM" id="SSF55031">
    <property type="entry name" value="Bacterial exopeptidase dimerisation domain"/>
    <property type="match status" value="1"/>
</dbReference>
<dbReference type="SUPFAM" id="SSF53187">
    <property type="entry name" value="Zn-dependent exopeptidases"/>
    <property type="match status" value="1"/>
</dbReference>
<dbReference type="PROSITE" id="PS00758">
    <property type="entry name" value="ARGE_DAPE_CPG2_1"/>
    <property type="match status" value="1"/>
</dbReference>
<dbReference type="PROSITE" id="PS00759">
    <property type="entry name" value="ARGE_DAPE_CPG2_2"/>
    <property type="match status" value="1"/>
</dbReference>
<feature type="chain" id="PRO_0000185322" description="Peptidase T">
    <location>
        <begin position="1"/>
        <end position="407"/>
    </location>
</feature>
<feature type="active site" evidence="1">
    <location>
        <position position="84"/>
    </location>
</feature>
<feature type="active site" description="Proton acceptor" evidence="1">
    <location>
        <position position="177"/>
    </location>
</feature>
<feature type="binding site" evidence="1">
    <location>
        <position position="82"/>
    </location>
    <ligand>
        <name>Zn(2+)</name>
        <dbReference type="ChEBI" id="CHEBI:29105"/>
        <label>1</label>
    </ligand>
</feature>
<feature type="binding site" evidence="1">
    <location>
        <position position="143"/>
    </location>
    <ligand>
        <name>Zn(2+)</name>
        <dbReference type="ChEBI" id="CHEBI:29105"/>
        <label>1</label>
    </ligand>
</feature>
<feature type="binding site" evidence="1">
    <location>
        <position position="143"/>
    </location>
    <ligand>
        <name>Zn(2+)</name>
        <dbReference type="ChEBI" id="CHEBI:29105"/>
        <label>2</label>
    </ligand>
</feature>
<feature type="binding site" evidence="1">
    <location>
        <position position="178"/>
    </location>
    <ligand>
        <name>Zn(2+)</name>
        <dbReference type="ChEBI" id="CHEBI:29105"/>
        <label>2</label>
    </ligand>
</feature>
<feature type="binding site" evidence="1">
    <location>
        <position position="200"/>
    </location>
    <ligand>
        <name>Zn(2+)</name>
        <dbReference type="ChEBI" id="CHEBI:29105"/>
        <label>1</label>
    </ligand>
</feature>
<feature type="binding site" evidence="1">
    <location>
        <position position="382"/>
    </location>
    <ligand>
        <name>Zn(2+)</name>
        <dbReference type="ChEBI" id="CHEBI:29105"/>
        <label>2</label>
    </ligand>
</feature>
<reference key="1">
    <citation type="journal article" date="2001" name="Proc. Natl. Acad. Sci. U.S.A.">
        <title>Complete genome sequence of an M1 strain of Streptococcus pyogenes.</title>
        <authorList>
            <person name="Ferretti J.J."/>
            <person name="McShan W.M."/>
            <person name="Ajdic D.J."/>
            <person name="Savic D.J."/>
            <person name="Savic G."/>
            <person name="Lyon K."/>
            <person name="Primeaux C."/>
            <person name="Sezate S."/>
            <person name="Suvorov A.N."/>
            <person name="Kenton S."/>
            <person name="Lai H.S."/>
            <person name="Lin S.P."/>
            <person name="Qian Y."/>
            <person name="Jia H.G."/>
            <person name="Najar F.Z."/>
            <person name="Ren Q."/>
            <person name="Zhu H."/>
            <person name="Song L."/>
            <person name="White J."/>
            <person name="Yuan X."/>
            <person name="Clifton S.W."/>
            <person name="Roe B.A."/>
            <person name="McLaughlin R.E."/>
        </authorList>
    </citation>
    <scope>NUCLEOTIDE SEQUENCE [LARGE SCALE GENOMIC DNA]</scope>
    <source>
        <strain>ATCC 700294 / SF370 / Serotype M1</strain>
    </source>
</reference>
<reference key="2">
    <citation type="journal article" date="2005" name="J. Infect. Dis.">
        <title>Evolutionary origin and emergence of a highly successful clone of serotype M1 group A Streptococcus involved multiple horizontal gene transfer events.</title>
        <authorList>
            <person name="Sumby P."/>
            <person name="Porcella S.F."/>
            <person name="Madrigal A.G."/>
            <person name="Barbian K.D."/>
            <person name="Virtaneva K."/>
            <person name="Ricklefs S.M."/>
            <person name="Sturdevant D.E."/>
            <person name="Graham M.R."/>
            <person name="Vuopio-Varkila J."/>
            <person name="Hoe N.P."/>
            <person name="Musser J.M."/>
        </authorList>
    </citation>
    <scope>NUCLEOTIDE SEQUENCE [LARGE SCALE GENOMIC DNA]</scope>
    <source>
        <strain>ATCC BAA-947 / MGAS5005 / Serotype M1</strain>
    </source>
</reference>
<organism>
    <name type="scientific">Streptococcus pyogenes serotype M1</name>
    <dbReference type="NCBI Taxonomy" id="301447"/>
    <lineage>
        <taxon>Bacteria</taxon>
        <taxon>Bacillati</taxon>
        <taxon>Bacillota</taxon>
        <taxon>Bacilli</taxon>
        <taxon>Lactobacillales</taxon>
        <taxon>Streptococcaceae</taxon>
        <taxon>Streptococcus</taxon>
    </lineage>
</organism>
<proteinExistence type="inferred from homology"/>
<name>PEPT_STRP1</name>
<sequence length="407" mass="44969">MKYDNLLDRFIKYVKVNTRSVPDSETTPSTESQEAFALTILKPEMEAIGLQDVHYNPVNGYLIGTLPANNPTLTRKIGFIAHMDTADFNAENVNPQIIDNYQGGDITLGSSNYKLDPKAFPNLNNYIGQTLITTDGTTLLGADDKSGIAEIMTAIEFLTSQPQIEHCDIKVAFGPDEEIGVGADKFEVADFEVDFAYTMDGGPLGELQYETFSAAALEVTFLGRNVHPGTAKDQMINALELAIDFHEKLPAKDRPEYTDGYQGFYHLTGLTGTVEEARASYIIRDFEEASFEARKVKVENIAQSMNAQLGTKRVLVELNDQYYNMKKVIEKDMTAIELAKEVMEELAIKPVIEPIRGGTDGSKISFMGIPTPNIFAGGENMHGRFEFVSLQTMERAVDVIIGLVCKA</sequence>
<comment type="function">
    <text evidence="1">Cleaves the N-terminal amino acid of tripeptides.</text>
</comment>
<comment type="catalytic activity">
    <reaction evidence="1">
        <text>Release of the N-terminal residue from a tripeptide.</text>
        <dbReference type="EC" id="3.4.11.4"/>
    </reaction>
</comment>
<comment type="cofactor">
    <cofactor evidence="1">
        <name>Zn(2+)</name>
        <dbReference type="ChEBI" id="CHEBI:29105"/>
    </cofactor>
    <text evidence="1">Binds 2 Zn(2+) ions per subunit.</text>
</comment>
<comment type="subcellular location">
    <subcellularLocation>
        <location evidence="1">Cytoplasm</location>
    </subcellularLocation>
</comment>
<comment type="similarity">
    <text evidence="1">Belongs to the peptidase M20B family.</text>
</comment>
<keyword id="KW-0031">Aminopeptidase</keyword>
<keyword id="KW-0963">Cytoplasm</keyword>
<keyword id="KW-0378">Hydrolase</keyword>
<keyword id="KW-0479">Metal-binding</keyword>
<keyword id="KW-0482">Metalloprotease</keyword>
<keyword id="KW-0645">Protease</keyword>
<keyword id="KW-1185">Reference proteome</keyword>
<keyword id="KW-0862">Zinc</keyword>
<evidence type="ECO:0000255" key="1">
    <source>
        <dbReference type="HAMAP-Rule" id="MF_00550"/>
    </source>
</evidence>
<accession>Q9A0F4</accession>
<accession>Q48ZI6</accession>